<accession>Q4L608</accession>
<gene>
    <name type="primary">glpD</name>
    <name type="ordered locus">SH1608</name>
</gene>
<feature type="chain" id="PRO_0000270067" description="Aerobic glycerol-3-phosphate dehydrogenase">
    <location>
        <begin position="1"/>
        <end position="557"/>
    </location>
</feature>
<feature type="binding site" evidence="2">
    <location>
        <begin position="21"/>
        <end position="49"/>
    </location>
    <ligand>
        <name>FAD</name>
        <dbReference type="ChEBI" id="CHEBI:57692"/>
    </ligand>
</feature>
<organism>
    <name type="scientific">Staphylococcus haemolyticus (strain JCSC1435)</name>
    <dbReference type="NCBI Taxonomy" id="279808"/>
    <lineage>
        <taxon>Bacteria</taxon>
        <taxon>Bacillati</taxon>
        <taxon>Bacillota</taxon>
        <taxon>Bacilli</taxon>
        <taxon>Bacillales</taxon>
        <taxon>Staphylococcaceae</taxon>
        <taxon>Staphylococcus</taxon>
    </lineage>
</organism>
<proteinExistence type="inferred from homology"/>
<evidence type="ECO:0000250" key="1"/>
<evidence type="ECO:0000255" key="2"/>
<evidence type="ECO:0000305" key="3"/>
<sequence length="557" mass="62821">MALSTLNREVIKKNLQNEEYDVVIIGGGITGAGIALDASQRGMKVALVEMQDFAQGTSSRSTKLVHGGLRYLKQAQIKVVAETGKERAIVYENGPHVTTPEWMLLPMHKGGTFGKFTTNLGLTAYDRLAGVKKYERKKMLSKKQTLNKEPLVKKDGLKGGGYYVEYRTDDARLTIEVMKRAEENGAEILNHTKSTDFIYDSKSKVRGIEVQDLLTGEMYEINAKKVINAAGPWVDEVRKKDYTRNNKQLRLTKGVHVVIDQSKFPLRQAVYFDTEKDGRMIFAIPREGKAYVGTTDTFYDNDKTKPLTTQEDRDYLIDAINYMFPDVNVKDEDIESTWAGVRPLILEDGKDPSEISRKDEIWEGKSGLLTIAGGKLTGYRHMALEIVDLLAKRLKQEYKLTFAECKTKHTPISGGDVGGSANFESFVERKVEEGKAIGLQADVAKRLASKYGSNVDKLYNIAQIAQDKDLKLPLELYVELVYSVQNEMVFKPTDFLIRRSGKLYFNINEVKQYKDAVVEELAKLLNYTQSQQNEFTKEINIAIEEATRGNEQLAVLK</sequence>
<dbReference type="EC" id="1.1.5.3"/>
<dbReference type="EMBL" id="AP006716">
    <property type="protein sequence ID" value="BAE04917.1"/>
    <property type="molecule type" value="Genomic_DNA"/>
</dbReference>
<dbReference type="RefSeq" id="WP_011275898.1">
    <property type="nucleotide sequence ID" value="NC_007168.1"/>
</dbReference>
<dbReference type="SMR" id="Q4L608"/>
<dbReference type="KEGG" id="sha:SH1608"/>
<dbReference type="eggNOG" id="COG0578">
    <property type="taxonomic scope" value="Bacteria"/>
</dbReference>
<dbReference type="HOGENOM" id="CLU_015740_5_2_9"/>
<dbReference type="OrthoDB" id="9766796at2"/>
<dbReference type="UniPathway" id="UPA00618">
    <property type="reaction ID" value="UER00674"/>
</dbReference>
<dbReference type="Proteomes" id="UP000000543">
    <property type="component" value="Chromosome"/>
</dbReference>
<dbReference type="GO" id="GO:0005737">
    <property type="term" value="C:cytoplasm"/>
    <property type="evidence" value="ECO:0007669"/>
    <property type="project" value="UniProtKB-SubCell"/>
</dbReference>
<dbReference type="GO" id="GO:0004368">
    <property type="term" value="F:glycerol-3-phosphate dehydrogenase (quinone) activity"/>
    <property type="evidence" value="ECO:0007669"/>
    <property type="project" value="UniProtKB-EC"/>
</dbReference>
<dbReference type="GO" id="GO:0019563">
    <property type="term" value="P:glycerol catabolic process"/>
    <property type="evidence" value="ECO:0007669"/>
    <property type="project" value="UniProtKB-UniPathway"/>
</dbReference>
<dbReference type="GO" id="GO:0046168">
    <property type="term" value="P:glycerol-3-phosphate catabolic process"/>
    <property type="evidence" value="ECO:0007669"/>
    <property type="project" value="TreeGrafter"/>
</dbReference>
<dbReference type="Gene3D" id="1.10.8.870">
    <property type="entry name" value="Alpha-glycerophosphate oxidase, cap domain"/>
    <property type="match status" value="1"/>
</dbReference>
<dbReference type="Gene3D" id="3.30.9.10">
    <property type="entry name" value="D-Amino Acid Oxidase, subunit A, domain 2"/>
    <property type="match status" value="1"/>
</dbReference>
<dbReference type="Gene3D" id="3.50.50.60">
    <property type="entry name" value="FAD/NAD(P)-binding domain"/>
    <property type="match status" value="1"/>
</dbReference>
<dbReference type="InterPro" id="IPR031656">
    <property type="entry name" value="DAO_C"/>
</dbReference>
<dbReference type="InterPro" id="IPR038299">
    <property type="entry name" value="DAO_C_sf"/>
</dbReference>
<dbReference type="InterPro" id="IPR006076">
    <property type="entry name" value="FAD-dep_OxRdtase"/>
</dbReference>
<dbReference type="InterPro" id="IPR036188">
    <property type="entry name" value="FAD/NAD-bd_sf"/>
</dbReference>
<dbReference type="InterPro" id="IPR000447">
    <property type="entry name" value="G3P_DH_FAD-dep"/>
</dbReference>
<dbReference type="PANTHER" id="PTHR11985:SF35">
    <property type="entry name" value="ANAEROBIC GLYCEROL-3-PHOSPHATE DEHYDROGENASE SUBUNIT A"/>
    <property type="match status" value="1"/>
</dbReference>
<dbReference type="PANTHER" id="PTHR11985">
    <property type="entry name" value="GLYCEROL-3-PHOSPHATE DEHYDROGENASE"/>
    <property type="match status" value="1"/>
</dbReference>
<dbReference type="Pfam" id="PF01266">
    <property type="entry name" value="DAO"/>
    <property type="match status" value="1"/>
</dbReference>
<dbReference type="Pfam" id="PF16901">
    <property type="entry name" value="DAO_C"/>
    <property type="match status" value="1"/>
</dbReference>
<dbReference type="PRINTS" id="PR01001">
    <property type="entry name" value="FADG3PDH"/>
</dbReference>
<dbReference type="SUPFAM" id="SSF54373">
    <property type="entry name" value="FAD-linked reductases, C-terminal domain"/>
    <property type="match status" value="1"/>
</dbReference>
<dbReference type="SUPFAM" id="SSF51905">
    <property type="entry name" value="FAD/NAD(P)-binding domain"/>
    <property type="match status" value="1"/>
</dbReference>
<dbReference type="PROSITE" id="PS00977">
    <property type="entry name" value="FAD_G3PDH_1"/>
    <property type="match status" value="1"/>
</dbReference>
<dbReference type="PROSITE" id="PS00978">
    <property type="entry name" value="FAD_G3PDH_2"/>
    <property type="match status" value="1"/>
</dbReference>
<protein>
    <recommendedName>
        <fullName>Aerobic glycerol-3-phosphate dehydrogenase</fullName>
        <ecNumber>1.1.5.3</ecNumber>
    </recommendedName>
</protein>
<name>GLPD_STAHJ</name>
<keyword id="KW-0963">Cytoplasm</keyword>
<keyword id="KW-0274">FAD</keyword>
<keyword id="KW-0285">Flavoprotein</keyword>
<keyword id="KW-0319">Glycerol metabolism</keyword>
<keyword id="KW-0560">Oxidoreductase</keyword>
<comment type="catalytic activity">
    <reaction>
        <text>a quinone + sn-glycerol 3-phosphate = dihydroxyacetone phosphate + a quinol</text>
        <dbReference type="Rhea" id="RHEA:18977"/>
        <dbReference type="ChEBI" id="CHEBI:24646"/>
        <dbReference type="ChEBI" id="CHEBI:57597"/>
        <dbReference type="ChEBI" id="CHEBI:57642"/>
        <dbReference type="ChEBI" id="CHEBI:132124"/>
        <dbReference type="EC" id="1.1.5.3"/>
    </reaction>
</comment>
<comment type="cofactor">
    <cofactor evidence="1">
        <name>FAD</name>
        <dbReference type="ChEBI" id="CHEBI:57692"/>
    </cofactor>
</comment>
<comment type="pathway">
    <text>Polyol metabolism; glycerol degradation via glycerol kinase pathway; glycerone phosphate from sn-glycerol 3-phosphate (aerobic route): step 1/1.</text>
</comment>
<comment type="subcellular location">
    <subcellularLocation>
        <location evidence="1">Cytoplasm</location>
    </subcellularLocation>
</comment>
<comment type="similarity">
    <text evidence="3">Belongs to the FAD-dependent glycerol-3-phosphate dehydrogenase family.</text>
</comment>
<reference key="1">
    <citation type="journal article" date="2005" name="J. Bacteriol.">
        <title>Whole-genome sequencing of Staphylococcus haemolyticus uncovers the extreme plasticity of its genome and the evolution of human-colonizing staphylococcal species.</title>
        <authorList>
            <person name="Takeuchi F."/>
            <person name="Watanabe S."/>
            <person name="Baba T."/>
            <person name="Yuzawa H."/>
            <person name="Ito T."/>
            <person name="Morimoto Y."/>
            <person name="Kuroda M."/>
            <person name="Cui L."/>
            <person name="Takahashi M."/>
            <person name="Ankai A."/>
            <person name="Baba S."/>
            <person name="Fukui S."/>
            <person name="Lee J.C."/>
            <person name="Hiramatsu K."/>
        </authorList>
    </citation>
    <scope>NUCLEOTIDE SEQUENCE [LARGE SCALE GENOMIC DNA]</scope>
    <source>
        <strain>JCSC1435</strain>
    </source>
</reference>